<dbReference type="EMBL" id="AE000516">
    <property type="protein sequence ID" value="AAK44994.1"/>
    <property type="molecule type" value="Genomic_DNA"/>
</dbReference>
<dbReference type="RefSeq" id="WP_003403733.1">
    <property type="nucleotide sequence ID" value="NZ_KK341227.1"/>
</dbReference>
<dbReference type="SMR" id="P9WJ66"/>
<dbReference type="KEGG" id="mtc:MT0760"/>
<dbReference type="PATRIC" id="fig|83331.31.peg.814"/>
<dbReference type="HOGENOM" id="CLU_056526_1_0_11"/>
<dbReference type="Proteomes" id="UP000001020">
    <property type="component" value="Chromosome"/>
</dbReference>
<dbReference type="GO" id="GO:0005886">
    <property type="term" value="C:plasma membrane"/>
    <property type="evidence" value="ECO:0007669"/>
    <property type="project" value="UniProtKB-SubCell"/>
</dbReference>
<dbReference type="GO" id="GO:0046872">
    <property type="term" value="F:metal ion binding"/>
    <property type="evidence" value="ECO:0007669"/>
    <property type="project" value="UniProtKB-KW"/>
</dbReference>
<dbReference type="GO" id="GO:0016989">
    <property type="term" value="F:sigma factor antagonist activity"/>
    <property type="evidence" value="ECO:0007669"/>
    <property type="project" value="TreeGrafter"/>
</dbReference>
<dbReference type="GO" id="GO:0006417">
    <property type="term" value="P:regulation of translation"/>
    <property type="evidence" value="ECO:0007669"/>
    <property type="project" value="TreeGrafter"/>
</dbReference>
<dbReference type="Gene3D" id="1.10.10.1320">
    <property type="entry name" value="Anti-sigma factor, zinc-finger domain"/>
    <property type="match status" value="1"/>
</dbReference>
<dbReference type="InterPro" id="IPR051474">
    <property type="entry name" value="Anti-sigma-K/W_factor"/>
</dbReference>
<dbReference type="InterPro" id="IPR041916">
    <property type="entry name" value="Anti_sigma_zinc_sf"/>
</dbReference>
<dbReference type="InterPro" id="IPR027383">
    <property type="entry name" value="Znf_put"/>
</dbReference>
<dbReference type="PANTHER" id="PTHR37461">
    <property type="entry name" value="ANTI-SIGMA-K FACTOR RSKA"/>
    <property type="match status" value="1"/>
</dbReference>
<dbReference type="PANTHER" id="PTHR37461:SF1">
    <property type="entry name" value="ANTI-SIGMA-K FACTOR RSKA"/>
    <property type="match status" value="1"/>
</dbReference>
<dbReference type="Pfam" id="PF13490">
    <property type="entry name" value="zf-HC2"/>
    <property type="match status" value="1"/>
</dbReference>
<accession>P9WJ66</accession>
<accession>F2GMW1</accession>
<accession>Q7ARS0</accession>
<accession>Q7D9D3</accession>
<name>RSLA_MYCTO</name>
<keyword id="KW-1003">Cell membrane</keyword>
<keyword id="KW-0472">Membrane</keyword>
<keyword id="KW-0479">Metal-binding</keyword>
<keyword id="KW-1185">Reference proteome</keyword>
<keyword id="KW-0804">Transcription</keyword>
<keyword id="KW-0805">Transcription regulation</keyword>
<keyword id="KW-0812">Transmembrane</keyword>
<keyword id="KW-1133">Transmembrane helix</keyword>
<keyword id="KW-0843">Virulence</keyword>
<keyword id="KW-0862">Zinc</keyword>
<feature type="chain" id="PRO_0000427883" description="Anti-sigma-L factor RslA">
    <location>
        <begin position="1"/>
        <end position="250"/>
    </location>
</feature>
<feature type="topological domain" description="Cytoplasmic">
    <location>
        <begin position="1"/>
        <end position="115"/>
    </location>
</feature>
<feature type="transmembrane region" description="Helical" evidence="2">
    <location>
        <begin position="116"/>
        <end position="136"/>
    </location>
</feature>
<feature type="topological domain" description="Extracellular">
    <location>
        <begin position="137"/>
        <end position="250"/>
    </location>
</feature>
<feature type="binding site" evidence="1">
    <location>
        <position position="25"/>
    </location>
    <ligand>
        <name>Zn(2+)</name>
        <dbReference type="ChEBI" id="CHEBI:29105"/>
    </ligand>
</feature>
<feature type="binding site" evidence="1">
    <location>
        <position position="50"/>
    </location>
    <ligand>
        <name>Zn(2+)</name>
        <dbReference type="ChEBI" id="CHEBI:29105"/>
    </ligand>
</feature>
<feature type="binding site" evidence="1">
    <location>
        <position position="54"/>
    </location>
    <ligand>
        <name>Zn(2+)</name>
        <dbReference type="ChEBI" id="CHEBI:29105"/>
    </ligand>
</feature>
<feature type="binding site" evidence="1">
    <location>
        <position position="57"/>
    </location>
    <ligand>
        <name>Zn(2+)</name>
        <dbReference type="ChEBI" id="CHEBI:29105"/>
    </ligand>
</feature>
<organism>
    <name type="scientific">Mycobacterium tuberculosis (strain CDC 1551 / Oshkosh)</name>
    <dbReference type="NCBI Taxonomy" id="83331"/>
    <lineage>
        <taxon>Bacteria</taxon>
        <taxon>Bacillati</taxon>
        <taxon>Actinomycetota</taxon>
        <taxon>Actinomycetes</taxon>
        <taxon>Mycobacteriales</taxon>
        <taxon>Mycobacteriaceae</taxon>
        <taxon>Mycobacterium</taxon>
        <taxon>Mycobacterium tuberculosis complex</taxon>
    </lineage>
</organism>
<reference key="1">
    <citation type="journal article" date="2002" name="J. Bacteriol.">
        <title>Whole-genome comparison of Mycobacterium tuberculosis clinical and laboratory strains.</title>
        <authorList>
            <person name="Fleischmann R.D."/>
            <person name="Alland D."/>
            <person name="Eisen J.A."/>
            <person name="Carpenter L."/>
            <person name="White O."/>
            <person name="Peterson J.D."/>
            <person name="DeBoy R.T."/>
            <person name="Dodson R.J."/>
            <person name="Gwinn M.L."/>
            <person name="Haft D.H."/>
            <person name="Hickey E.K."/>
            <person name="Kolonay J.F."/>
            <person name="Nelson W.C."/>
            <person name="Umayam L.A."/>
            <person name="Ermolaeva M.D."/>
            <person name="Salzberg S.L."/>
            <person name="Delcher A."/>
            <person name="Utterback T.R."/>
            <person name="Weidman J.F."/>
            <person name="Khouri H.M."/>
            <person name="Gill J."/>
            <person name="Mikula A."/>
            <person name="Bishai W."/>
            <person name="Jacobs W.R. Jr."/>
            <person name="Venter J.C."/>
            <person name="Fraser C.M."/>
        </authorList>
    </citation>
    <scope>NUCLEOTIDE SEQUENCE [LARGE SCALE GENOMIC DNA]</scope>
    <source>
        <strain>CDC 1551 / Oshkosh</strain>
    </source>
</reference>
<proteinExistence type="inferred from homology"/>
<comment type="function">
    <text evidence="1">An anti-sigma factor for extracytoplasmic function (ECF) sigma factor SigL. ECF sigma factors are held in an inactive form by an anti-sigma factor until released by regulated intramembrane proteolysis (RIP). RIP occurs when an extracytoplasmic signal triggers a concerted proteolytic cascade to transmit information and elicit cellular responses. The membrane-spanning regulatory substrate protein is first cut extracytoplasmically (site-1 protease, S1P), then within the membrane itself (site-2 protease, S2P, Rip1), while cytoplasmic proteases finish degrading the regulatory protein, liberating the sigma factor (By similarity).</text>
</comment>
<comment type="cofactor">
    <cofactor evidence="1">
        <name>Zn(2+)</name>
        <dbReference type="ChEBI" id="CHEBI:29105"/>
    </cofactor>
    <text evidence="1">Binds 1 Zn(2+) ion per subunit.</text>
</comment>
<comment type="subunit">
    <text evidence="1">Interacts with ECF RNA polymerase sigma factor SigL; this should inhibit the interaction of SigL with the RNA polymerase catalytic core.</text>
</comment>
<comment type="subcellular location">
    <subcellularLocation>
        <location evidence="3">Cell membrane</location>
        <topology evidence="3">Single-pass membrane protein</topology>
    </subcellularLocation>
</comment>
<comment type="similarity">
    <text evidence="3">Belongs to the zinc-associated anti-sigma factor (ZAS) superfamily.</text>
</comment>
<sequence>MTMPLRGLGPPDDTGVREVSTGDDHHYAMWDAAYVLGALSAADRREFEAHLAGCPECRGAVTELCGVPALLSQLDRDEVAAISESAPTVVASGLSPELLPSLLAAVHRRRRRTRLITWVASSAAAAVLAIGVLVGVQGHSAAPQRAAVSALPMAQVGTQLLASTVSISGEPWGTFINLRCVCLAPPYASHDTLAMVVVGRDGSQTRLATWLAEPGHTATPAGSISTPVDQIAAVQVVAADTGQVLLQRSL</sequence>
<gene>
    <name type="primary">rslA</name>
    <name type="ordered locus">MT0760</name>
</gene>
<protein>
    <recommendedName>
        <fullName>Anti-sigma-L factor RslA</fullName>
    </recommendedName>
    <alternativeName>
        <fullName>Regulator of SigL</fullName>
    </alternativeName>
    <alternativeName>
        <fullName>Sigma-L anti-sigma factor RslA</fullName>
    </alternativeName>
</protein>
<evidence type="ECO:0000250" key="1"/>
<evidence type="ECO:0000255" key="2"/>
<evidence type="ECO:0000305" key="3"/>